<keyword id="KW-1003">Cell membrane</keyword>
<keyword id="KW-0210">Decarboxylase</keyword>
<keyword id="KW-0444">Lipid biosynthesis</keyword>
<keyword id="KW-0443">Lipid metabolism</keyword>
<keyword id="KW-0456">Lyase</keyword>
<keyword id="KW-0472">Membrane</keyword>
<keyword id="KW-0594">Phospholipid biosynthesis</keyword>
<keyword id="KW-1208">Phospholipid metabolism</keyword>
<keyword id="KW-0670">Pyruvate</keyword>
<keyword id="KW-1185">Reference proteome</keyword>
<keyword id="KW-0865">Zymogen</keyword>
<name>PSD_GEOKA</name>
<accession>Q5KWX3</accession>
<protein>
    <recommendedName>
        <fullName evidence="1">Phosphatidylserine decarboxylase proenzyme</fullName>
        <ecNumber evidence="1">4.1.1.65</ecNumber>
    </recommendedName>
    <component>
        <recommendedName>
            <fullName evidence="1">Phosphatidylserine decarboxylase alpha chain</fullName>
        </recommendedName>
    </component>
    <component>
        <recommendedName>
            <fullName evidence="1">Phosphatidylserine decarboxylase beta chain</fullName>
        </recommendedName>
    </component>
</protein>
<reference key="1">
    <citation type="journal article" date="2004" name="Nucleic Acids Res.">
        <title>Thermoadaptation trait revealed by the genome sequence of thermophilic Geobacillus kaustophilus.</title>
        <authorList>
            <person name="Takami H."/>
            <person name="Takaki Y."/>
            <person name="Chee G.-J."/>
            <person name="Nishi S."/>
            <person name="Shimamura S."/>
            <person name="Suzuki H."/>
            <person name="Matsui S."/>
            <person name="Uchiyama I."/>
        </authorList>
    </citation>
    <scope>NUCLEOTIDE SEQUENCE [LARGE SCALE GENOMIC DNA]</scope>
    <source>
        <strain>HTA426</strain>
    </source>
</reference>
<evidence type="ECO:0000255" key="1">
    <source>
        <dbReference type="HAMAP-Rule" id="MF_00662"/>
    </source>
</evidence>
<gene>
    <name evidence="1" type="primary">psd</name>
    <name type="ordered locus">GK2528</name>
</gene>
<sequence length="264" mass="30042">MRKWLYRLFIELTNHSLSSKLLASFAKSRLSGLLISSYAKIYHINQDEMEKSLKNYKTLQQLFVRRLKAGVRPVDADEHTVVSPVDAVIEDMGTIRENCEMIVKGKPYSIAEMLGSVEAAQPYVNGFFFILYLSPSHYHRIHSPISGVIEKQWALGRKSYPVNRLGLKYGRRPLEKNYRLITEVTAGGKRLAIVKIGAMFVNSIELTHEGEQLVKGEEMAYFSFGSTVVLLFERGSFAPDPRIVAPMPIKVGERLGYWCEAHER</sequence>
<feature type="chain" id="PRO_0000029659" description="Phosphatidylserine decarboxylase beta chain" evidence="1">
    <location>
        <begin position="1"/>
        <end position="225"/>
    </location>
</feature>
<feature type="chain" id="PRO_0000029660" description="Phosphatidylserine decarboxylase alpha chain" evidence="1">
    <location>
        <begin position="226"/>
        <end position="264"/>
    </location>
</feature>
<feature type="active site" description="Charge relay system; for autoendoproteolytic cleavage activity" evidence="1">
    <location>
        <position position="86"/>
    </location>
</feature>
<feature type="active site" description="Charge relay system; for autoendoproteolytic cleavage activity" evidence="1">
    <location>
        <position position="142"/>
    </location>
</feature>
<feature type="active site" description="Charge relay system; for autoendoproteolytic cleavage activity" evidence="1">
    <location>
        <position position="226"/>
    </location>
</feature>
<feature type="active site" description="Schiff-base intermediate with substrate; via pyruvic acid; for decarboxylase activity" evidence="1">
    <location>
        <position position="226"/>
    </location>
</feature>
<feature type="site" description="Cleavage (non-hydrolytic); by autocatalysis" evidence="1">
    <location>
        <begin position="225"/>
        <end position="226"/>
    </location>
</feature>
<feature type="modified residue" description="Pyruvic acid (Ser); by autocatalysis" evidence="1">
    <location>
        <position position="226"/>
    </location>
</feature>
<organism>
    <name type="scientific">Geobacillus kaustophilus (strain HTA426)</name>
    <dbReference type="NCBI Taxonomy" id="235909"/>
    <lineage>
        <taxon>Bacteria</taxon>
        <taxon>Bacillati</taxon>
        <taxon>Bacillota</taxon>
        <taxon>Bacilli</taxon>
        <taxon>Bacillales</taxon>
        <taxon>Anoxybacillaceae</taxon>
        <taxon>Geobacillus</taxon>
        <taxon>Geobacillus thermoleovorans group</taxon>
    </lineage>
</organism>
<proteinExistence type="inferred from homology"/>
<comment type="function">
    <text evidence="1">Catalyzes the formation of phosphatidylethanolamine (PtdEtn) from phosphatidylserine (PtdSer).</text>
</comment>
<comment type="catalytic activity">
    <reaction evidence="1">
        <text>a 1,2-diacyl-sn-glycero-3-phospho-L-serine + H(+) = a 1,2-diacyl-sn-glycero-3-phosphoethanolamine + CO2</text>
        <dbReference type="Rhea" id="RHEA:20828"/>
        <dbReference type="ChEBI" id="CHEBI:15378"/>
        <dbReference type="ChEBI" id="CHEBI:16526"/>
        <dbReference type="ChEBI" id="CHEBI:57262"/>
        <dbReference type="ChEBI" id="CHEBI:64612"/>
        <dbReference type="EC" id="4.1.1.65"/>
    </reaction>
</comment>
<comment type="cofactor">
    <cofactor evidence="1">
        <name>pyruvate</name>
        <dbReference type="ChEBI" id="CHEBI:15361"/>
    </cofactor>
    <text evidence="1">Binds 1 pyruvoyl group covalently per subunit.</text>
</comment>
<comment type="pathway">
    <text evidence="1">Phospholipid metabolism; phosphatidylethanolamine biosynthesis; phosphatidylethanolamine from CDP-diacylglycerol: step 2/2.</text>
</comment>
<comment type="subunit">
    <text evidence="1">Heterodimer of a large membrane-associated beta subunit and a small pyruvoyl-containing alpha subunit.</text>
</comment>
<comment type="subcellular location">
    <subcellularLocation>
        <location evidence="1">Cell membrane</location>
        <topology evidence="1">Peripheral membrane protein</topology>
    </subcellularLocation>
</comment>
<comment type="PTM">
    <text evidence="1">Is synthesized initially as an inactive proenzyme. Formation of the active enzyme involves a self-maturation process in which the active site pyruvoyl group is generated from an internal serine residue via an autocatalytic post-translational modification. Two non-identical subunits are generated from the proenzyme in this reaction, and the pyruvate is formed at the N-terminus of the alpha chain, which is derived from the carboxyl end of the proenzyme. The autoendoproteolytic cleavage occurs by a canonical serine protease mechanism, in which the side chain hydroxyl group of the serine supplies its oxygen atom to form the C-terminus of the beta chain, while the remainder of the serine residue undergoes an oxidative deamination to produce ammonia and the pyruvoyl prosthetic group on the alpha chain. During this reaction, the Ser that is part of the protease active site of the proenzyme becomes the pyruvoyl prosthetic group, which constitutes an essential element of the active site of the mature decarboxylase.</text>
</comment>
<comment type="similarity">
    <text evidence="1">Belongs to the phosphatidylserine decarboxylase family. PSD-B subfamily. Prokaryotic type I sub-subfamily.</text>
</comment>
<dbReference type="EC" id="4.1.1.65" evidence="1"/>
<dbReference type="EMBL" id="BA000043">
    <property type="protein sequence ID" value="BAD76813.1"/>
    <property type="molecule type" value="Genomic_DNA"/>
</dbReference>
<dbReference type="RefSeq" id="WP_011232006.1">
    <property type="nucleotide sequence ID" value="NC_006510.1"/>
</dbReference>
<dbReference type="SMR" id="Q5KWX3"/>
<dbReference type="STRING" id="235909.GK2528"/>
<dbReference type="KEGG" id="gka:GK2528"/>
<dbReference type="eggNOG" id="COG0688">
    <property type="taxonomic scope" value="Bacteria"/>
</dbReference>
<dbReference type="HOGENOM" id="CLU_029061_4_0_9"/>
<dbReference type="UniPathway" id="UPA00558">
    <property type="reaction ID" value="UER00616"/>
</dbReference>
<dbReference type="Proteomes" id="UP000001172">
    <property type="component" value="Chromosome"/>
</dbReference>
<dbReference type="GO" id="GO:0005886">
    <property type="term" value="C:plasma membrane"/>
    <property type="evidence" value="ECO:0007669"/>
    <property type="project" value="UniProtKB-SubCell"/>
</dbReference>
<dbReference type="GO" id="GO:0004609">
    <property type="term" value="F:phosphatidylserine decarboxylase activity"/>
    <property type="evidence" value="ECO:0007669"/>
    <property type="project" value="UniProtKB-UniRule"/>
</dbReference>
<dbReference type="GO" id="GO:0006646">
    <property type="term" value="P:phosphatidylethanolamine biosynthetic process"/>
    <property type="evidence" value="ECO:0007669"/>
    <property type="project" value="UniProtKB-UniRule"/>
</dbReference>
<dbReference type="HAMAP" id="MF_00662">
    <property type="entry name" value="PS_decarb_PSD_B_type1"/>
    <property type="match status" value="1"/>
</dbReference>
<dbReference type="InterPro" id="IPR003817">
    <property type="entry name" value="PS_Dcarbxylase"/>
</dbReference>
<dbReference type="InterPro" id="IPR033177">
    <property type="entry name" value="PSD-B"/>
</dbReference>
<dbReference type="InterPro" id="IPR033178">
    <property type="entry name" value="PSD_type1_pro"/>
</dbReference>
<dbReference type="NCBIfam" id="NF002853">
    <property type="entry name" value="PRK03140.1"/>
    <property type="match status" value="1"/>
</dbReference>
<dbReference type="NCBIfam" id="TIGR00163">
    <property type="entry name" value="PS_decarb"/>
    <property type="match status" value="1"/>
</dbReference>
<dbReference type="PANTHER" id="PTHR10067">
    <property type="entry name" value="PHOSPHATIDYLSERINE DECARBOXYLASE"/>
    <property type="match status" value="1"/>
</dbReference>
<dbReference type="PANTHER" id="PTHR10067:SF6">
    <property type="entry name" value="PHOSPHATIDYLSERINE DECARBOXYLASE PROENZYME, MITOCHONDRIAL"/>
    <property type="match status" value="1"/>
</dbReference>
<dbReference type="Pfam" id="PF02666">
    <property type="entry name" value="PS_Dcarbxylase"/>
    <property type="match status" value="1"/>
</dbReference>